<protein>
    <recommendedName>
        <fullName evidence="1">Ribosomal RNA small subunit methyltransferase G</fullName>
        <ecNumber evidence="1">2.1.1.170</ecNumber>
    </recommendedName>
    <alternativeName>
        <fullName evidence="1">16S rRNA 7-methylguanosine methyltransferase</fullName>
        <shortName evidence="1">16S rRNA m7G methyltransferase</shortName>
    </alternativeName>
</protein>
<feature type="chain" id="PRO_1000010207" description="Ribosomal RNA small subunit methyltransferase G">
    <location>
        <begin position="1"/>
        <end position="207"/>
    </location>
</feature>
<feature type="binding site" evidence="1">
    <location>
        <position position="73"/>
    </location>
    <ligand>
        <name>S-adenosyl-L-methionine</name>
        <dbReference type="ChEBI" id="CHEBI:59789"/>
    </ligand>
</feature>
<feature type="binding site" evidence="1">
    <location>
        <position position="78"/>
    </location>
    <ligand>
        <name>S-adenosyl-L-methionine</name>
        <dbReference type="ChEBI" id="CHEBI:59789"/>
    </ligand>
</feature>
<feature type="binding site" evidence="1">
    <location>
        <begin position="124"/>
        <end position="125"/>
    </location>
    <ligand>
        <name>S-adenosyl-L-methionine</name>
        <dbReference type="ChEBI" id="CHEBI:59789"/>
    </ligand>
</feature>
<feature type="binding site" evidence="1">
    <location>
        <position position="139"/>
    </location>
    <ligand>
        <name>S-adenosyl-L-methionine</name>
        <dbReference type="ChEBI" id="CHEBI:59789"/>
    </ligand>
</feature>
<accession>Q31UN9</accession>
<gene>
    <name evidence="1" type="primary">rsmG</name>
    <name type="ordered locus">SBO_3747</name>
</gene>
<reference key="1">
    <citation type="journal article" date="2005" name="Nucleic Acids Res.">
        <title>Genome dynamics and diversity of Shigella species, the etiologic agents of bacillary dysentery.</title>
        <authorList>
            <person name="Yang F."/>
            <person name="Yang J."/>
            <person name="Zhang X."/>
            <person name="Chen L."/>
            <person name="Jiang Y."/>
            <person name="Yan Y."/>
            <person name="Tang X."/>
            <person name="Wang J."/>
            <person name="Xiong Z."/>
            <person name="Dong J."/>
            <person name="Xue Y."/>
            <person name="Zhu Y."/>
            <person name="Xu X."/>
            <person name="Sun L."/>
            <person name="Chen S."/>
            <person name="Nie H."/>
            <person name="Peng J."/>
            <person name="Xu J."/>
            <person name="Wang Y."/>
            <person name="Yuan Z."/>
            <person name="Wen Y."/>
            <person name="Yao Z."/>
            <person name="Shen Y."/>
            <person name="Qiang B."/>
            <person name="Hou Y."/>
            <person name="Yu J."/>
            <person name="Jin Q."/>
        </authorList>
    </citation>
    <scope>NUCLEOTIDE SEQUENCE [LARGE SCALE GENOMIC DNA]</scope>
    <source>
        <strain>Sb227</strain>
    </source>
</reference>
<name>RSMG_SHIBS</name>
<keyword id="KW-0963">Cytoplasm</keyword>
<keyword id="KW-0489">Methyltransferase</keyword>
<keyword id="KW-0698">rRNA processing</keyword>
<keyword id="KW-0949">S-adenosyl-L-methionine</keyword>
<keyword id="KW-0808">Transferase</keyword>
<dbReference type="EC" id="2.1.1.170" evidence="1"/>
<dbReference type="EMBL" id="CP000036">
    <property type="protein sequence ID" value="ABB68219.1"/>
    <property type="molecule type" value="Genomic_DNA"/>
</dbReference>
<dbReference type="RefSeq" id="WP_000932839.1">
    <property type="nucleotide sequence ID" value="NC_007613.1"/>
</dbReference>
<dbReference type="SMR" id="Q31UN9"/>
<dbReference type="GeneID" id="93778227"/>
<dbReference type="KEGG" id="sbo:SBO_3747"/>
<dbReference type="HOGENOM" id="CLU_065341_2_2_6"/>
<dbReference type="Proteomes" id="UP000007067">
    <property type="component" value="Chromosome"/>
</dbReference>
<dbReference type="GO" id="GO:0005829">
    <property type="term" value="C:cytosol"/>
    <property type="evidence" value="ECO:0007669"/>
    <property type="project" value="TreeGrafter"/>
</dbReference>
<dbReference type="GO" id="GO:0070043">
    <property type="term" value="F:rRNA (guanine-N7-)-methyltransferase activity"/>
    <property type="evidence" value="ECO:0007669"/>
    <property type="project" value="UniProtKB-UniRule"/>
</dbReference>
<dbReference type="CDD" id="cd02440">
    <property type="entry name" value="AdoMet_MTases"/>
    <property type="match status" value="1"/>
</dbReference>
<dbReference type="FunFam" id="3.40.50.150:FF:000032">
    <property type="entry name" value="Ribosomal RNA small subunit methyltransferase G"/>
    <property type="match status" value="1"/>
</dbReference>
<dbReference type="Gene3D" id="3.40.50.150">
    <property type="entry name" value="Vaccinia Virus protein VP39"/>
    <property type="match status" value="1"/>
</dbReference>
<dbReference type="HAMAP" id="MF_00074">
    <property type="entry name" value="16SrRNA_methyltr_G"/>
    <property type="match status" value="1"/>
</dbReference>
<dbReference type="InterPro" id="IPR003682">
    <property type="entry name" value="rRNA_ssu_MeTfrase_G"/>
</dbReference>
<dbReference type="InterPro" id="IPR029063">
    <property type="entry name" value="SAM-dependent_MTases_sf"/>
</dbReference>
<dbReference type="NCBIfam" id="TIGR00138">
    <property type="entry name" value="rsmG_gidB"/>
    <property type="match status" value="1"/>
</dbReference>
<dbReference type="PANTHER" id="PTHR31760">
    <property type="entry name" value="S-ADENOSYL-L-METHIONINE-DEPENDENT METHYLTRANSFERASES SUPERFAMILY PROTEIN"/>
    <property type="match status" value="1"/>
</dbReference>
<dbReference type="PANTHER" id="PTHR31760:SF0">
    <property type="entry name" value="S-ADENOSYL-L-METHIONINE-DEPENDENT METHYLTRANSFERASES SUPERFAMILY PROTEIN"/>
    <property type="match status" value="1"/>
</dbReference>
<dbReference type="Pfam" id="PF02527">
    <property type="entry name" value="GidB"/>
    <property type="match status" value="1"/>
</dbReference>
<dbReference type="PIRSF" id="PIRSF003078">
    <property type="entry name" value="GidB"/>
    <property type="match status" value="1"/>
</dbReference>
<dbReference type="SUPFAM" id="SSF53335">
    <property type="entry name" value="S-adenosyl-L-methionine-dependent methyltransferases"/>
    <property type="match status" value="1"/>
</dbReference>
<evidence type="ECO:0000255" key="1">
    <source>
        <dbReference type="HAMAP-Rule" id="MF_00074"/>
    </source>
</evidence>
<proteinExistence type="inferred from homology"/>
<sequence length="207" mass="23431">MLNKLSLLLKDAGISLTDHQKNQLIAYVNMLHKWNKAYNLTSVRDPNEMLVRHILDSIVVAPYLQGERFIDVGTGPGLPGIPLSIVRPEAHFTLLDSLGKRVRFLRQVQHELKLENIEPVQSRVEEFPSEPPFDGVISRAFASLNDMVSWCHHLPGEQGRFYALKGQMPEDEIALLPEEYQVESVVKLQVPALDGERHLVVIKANKI</sequence>
<organism>
    <name type="scientific">Shigella boydii serotype 4 (strain Sb227)</name>
    <dbReference type="NCBI Taxonomy" id="300268"/>
    <lineage>
        <taxon>Bacteria</taxon>
        <taxon>Pseudomonadati</taxon>
        <taxon>Pseudomonadota</taxon>
        <taxon>Gammaproteobacteria</taxon>
        <taxon>Enterobacterales</taxon>
        <taxon>Enterobacteriaceae</taxon>
        <taxon>Shigella</taxon>
    </lineage>
</organism>
<comment type="function">
    <text evidence="1">Specifically methylates the N7 position of guanine in position 527 of 16S rRNA.</text>
</comment>
<comment type="catalytic activity">
    <reaction evidence="1">
        <text>guanosine(527) in 16S rRNA + S-adenosyl-L-methionine = N(7)-methylguanosine(527) in 16S rRNA + S-adenosyl-L-homocysteine</text>
        <dbReference type="Rhea" id="RHEA:42732"/>
        <dbReference type="Rhea" id="RHEA-COMP:10209"/>
        <dbReference type="Rhea" id="RHEA-COMP:10210"/>
        <dbReference type="ChEBI" id="CHEBI:57856"/>
        <dbReference type="ChEBI" id="CHEBI:59789"/>
        <dbReference type="ChEBI" id="CHEBI:74269"/>
        <dbReference type="ChEBI" id="CHEBI:74480"/>
        <dbReference type="EC" id="2.1.1.170"/>
    </reaction>
</comment>
<comment type="subcellular location">
    <subcellularLocation>
        <location evidence="1">Cytoplasm</location>
    </subcellularLocation>
</comment>
<comment type="similarity">
    <text evidence="1">Belongs to the methyltransferase superfamily. RNA methyltransferase RsmG family.</text>
</comment>